<feature type="chain" id="PRO_0000086453" description="NUAK family SNF1-like kinase 1">
    <location>
        <begin position="1"/>
        <end position="661"/>
    </location>
</feature>
<feature type="domain" description="Protein kinase" evidence="1">
    <location>
        <begin position="55"/>
        <end position="306"/>
    </location>
</feature>
<feature type="region of interest" description="Disordered" evidence="3">
    <location>
        <begin position="1"/>
        <end position="24"/>
    </location>
</feature>
<feature type="region of interest" description="Disordered" evidence="3">
    <location>
        <begin position="345"/>
        <end position="421"/>
    </location>
</feature>
<feature type="region of interest" description="Disordered" evidence="3">
    <location>
        <begin position="442"/>
        <end position="570"/>
    </location>
</feature>
<feature type="short sequence motif" description="GILK motif">
    <location>
        <begin position="399"/>
        <end position="402"/>
    </location>
</feature>
<feature type="compositionally biased region" description="Basic residues" evidence="3">
    <location>
        <begin position="393"/>
        <end position="404"/>
    </location>
</feature>
<feature type="compositionally biased region" description="Basic residues" evidence="3">
    <location>
        <begin position="518"/>
        <end position="529"/>
    </location>
</feature>
<feature type="active site" description="Proton acceptor" evidence="1 2">
    <location>
        <position position="178"/>
    </location>
</feature>
<feature type="binding site" evidence="1">
    <location>
        <begin position="61"/>
        <end position="69"/>
    </location>
    <ligand>
        <name>ATP</name>
        <dbReference type="ChEBI" id="CHEBI:30616"/>
    </ligand>
</feature>
<feature type="binding site" evidence="18">
    <location>
        <position position="84"/>
    </location>
    <ligand>
        <name>ATP</name>
        <dbReference type="ChEBI" id="CHEBI:30616"/>
    </ligand>
</feature>
<feature type="modified residue" description="N-acetylmethionine" evidence="19">
    <location>
        <position position="1"/>
    </location>
</feature>
<feature type="modified residue" description="Phosphoserine" evidence="19">
    <location>
        <position position="22"/>
    </location>
</feature>
<feature type="modified residue" description="Phosphothreonine; by LKB1" evidence="5 14 19">
    <location>
        <position position="211"/>
    </location>
</feature>
<feature type="modified residue" description="Phosphoserine" evidence="19">
    <location>
        <position position="455"/>
    </location>
</feature>
<feature type="modified residue" description="Phosphoserine; by PKB/AKT1" evidence="4">
    <location>
        <position position="600"/>
    </location>
</feature>
<feature type="splice variant" id="VSP_014236" description="In isoform 2." evidence="17">
    <original>ENILLDDNCNIKIADFGLSNLYQKDKF</original>
    <variation>KKTSRENQVTTLPQSAVSLRSCWTVMM</variation>
    <location>
        <begin position="182"/>
        <end position="208"/>
    </location>
</feature>
<feature type="splice variant" id="VSP_014237" description="In isoform 2." evidence="17">
    <location>
        <begin position="209"/>
        <end position="661"/>
    </location>
</feature>
<feature type="sequence variant" id="VAR_040963" description="In dbSNP:rs55774704." evidence="11">
    <original>G</original>
    <variation>D</variation>
    <location>
        <position position="419"/>
    </location>
</feature>
<feature type="sequence variant" id="VAR_017246" description="In dbSNP:rs3741883." evidence="11">
    <original>P</original>
    <variation>R</variation>
    <location>
        <position position="543"/>
    </location>
</feature>
<feature type="mutagenesis site" description="Abolishes kinase activity and ability to induce senescence." evidence="13 15">
    <original>K</original>
    <variation>A</variation>
    <location>
        <position position="84"/>
    </location>
</feature>
<feature type="mutagenesis site" description="Prevents phosphorylation and activation by STK11/LKB1 complex. Abolishes ability to induce senescence." evidence="5 13 15">
    <original>T</original>
    <variation>A</variation>
    <location>
        <position position="211"/>
    </location>
</feature>
<feature type="mutagenesis site" description="Abolishes interaction with PPP1CB and ability to regulate myosin PP1 activity." evidence="14">
    <original>IL</original>
    <variation>KK</variation>
    <location>
        <begin position="400"/>
        <end position="401"/>
    </location>
</feature>
<feature type="mutagenesis site" description="Abrogates phosphorylation by PKB/AKT1. Does not affect ability to induce senescence." evidence="4 13">
    <original>S</original>
    <variation>A</variation>
    <location>
        <position position="600"/>
    </location>
</feature>
<feature type="sequence conflict" description="In Ref. 3; BAB55026." evidence="18" ref="3">
    <original>I</original>
    <variation>V</variation>
    <location>
        <position position="86"/>
    </location>
</feature>
<organism>
    <name type="scientific">Homo sapiens</name>
    <name type="common">Human</name>
    <dbReference type="NCBI Taxonomy" id="9606"/>
    <lineage>
        <taxon>Eukaryota</taxon>
        <taxon>Metazoa</taxon>
        <taxon>Chordata</taxon>
        <taxon>Craniata</taxon>
        <taxon>Vertebrata</taxon>
        <taxon>Euteleostomi</taxon>
        <taxon>Mammalia</taxon>
        <taxon>Eutheria</taxon>
        <taxon>Euarchontoglires</taxon>
        <taxon>Primates</taxon>
        <taxon>Haplorrhini</taxon>
        <taxon>Catarrhini</taxon>
        <taxon>Hominidae</taxon>
        <taxon>Homo</taxon>
    </lineage>
</organism>
<evidence type="ECO:0000255" key="1">
    <source>
        <dbReference type="PROSITE-ProRule" id="PRU00159"/>
    </source>
</evidence>
<evidence type="ECO:0000255" key="2">
    <source>
        <dbReference type="PROSITE-ProRule" id="PRU10027"/>
    </source>
</evidence>
<evidence type="ECO:0000256" key="3">
    <source>
        <dbReference type="SAM" id="MobiDB-lite"/>
    </source>
</evidence>
<evidence type="ECO:0000269" key="4">
    <source>
    </source>
</evidence>
<evidence type="ECO:0000269" key="5">
    <source>
    </source>
</evidence>
<evidence type="ECO:0000269" key="6">
    <source>
    </source>
</evidence>
<evidence type="ECO:0000269" key="7">
    <source>
    </source>
</evidence>
<evidence type="ECO:0000269" key="8">
    <source>
    </source>
</evidence>
<evidence type="ECO:0000269" key="9">
    <source>
    </source>
</evidence>
<evidence type="ECO:0000269" key="10">
    <source>
    </source>
</evidence>
<evidence type="ECO:0000269" key="11">
    <source>
    </source>
</evidence>
<evidence type="ECO:0000269" key="12">
    <source>
    </source>
</evidence>
<evidence type="ECO:0000269" key="13">
    <source>
    </source>
</evidence>
<evidence type="ECO:0000269" key="14">
    <source>
    </source>
</evidence>
<evidence type="ECO:0000269" key="15">
    <source>
    </source>
</evidence>
<evidence type="ECO:0000269" key="16">
    <source>
    </source>
</evidence>
<evidence type="ECO:0000303" key="17">
    <source>
    </source>
</evidence>
<evidence type="ECO:0000305" key="18"/>
<evidence type="ECO:0007744" key="19">
    <source>
    </source>
</evidence>
<name>NUAK1_HUMAN</name>
<dbReference type="EC" id="2.7.11.1"/>
<dbReference type="EMBL" id="AB011109">
    <property type="protein sequence ID" value="BAA25463.2"/>
    <property type="status" value="ALT_INIT"/>
    <property type="molecule type" value="mRNA"/>
</dbReference>
<dbReference type="EMBL" id="AK027302">
    <property type="protein sequence ID" value="BAB55026.1"/>
    <property type="molecule type" value="mRNA"/>
</dbReference>
<dbReference type="EMBL" id="AK289992">
    <property type="protein sequence ID" value="BAF82681.1"/>
    <property type="molecule type" value="mRNA"/>
</dbReference>
<dbReference type="EMBL" id="AC010182">
    <property type="status" value="NOT_ANNOTATED_CDS"/>
    <property type="molecule type" value="Genomic_DNA"/>
</dbReference>
<dbReference type="EMBL" id="AC011595">
    <property type="status" value="NOT_ANNOTATED_CDS"/>
    <property type="molecule type" value="Genomic_DNA"/>
</dbReference>
<dbReference type="EMBL" id="CH471054">
    <property type="protein sequence ID" value="EAW97768.1"/>
    <property type="molecule type" value="Genomic_DNA"/>
</dbReference>
<dbReference type="EMBL" id="BC152462">
    <property type="protein sequence ID" value="AAI52463.1"/>
    <property type="molecule type" value="mRNA"/>
</dbReference>
<dbReference type="CCDS" id="CCDS31892.1">
    <molecule id="O60285-1"/>
</dbReference>
<dbReference type="RefSeq" id="NP_055655.1">
    <molecule id="O60285-1"/>
    <property type="nucleotide sequence ID" value="NM_014840.3"/>
</dbReference>
<dbReference type="SMR" id="O60285"/>
<dbReference type="BioGRID" id="115221">
    <property type="interactions" value="94"/>
</dbReference>
<dbReference type="FunCoup" id="O60285">
    <property type="interactions" value="1332"/>
</dbReference>
<dbReference type="IntAct" id="O60285">
    <property type="interactions" value="70"/>
</dbReference>
<dbReference type="MINT" id="O60285"/>
<dbReference type="STRING" id="9606.ENSP00000261402"/>
<dbReference type="BindingDB" id="O60285"/>
<dbReference type="ChEMBL" id="CHEMBL5784"/>
<dbReference type="DrugBank" id="DB12010">
    <property type="generic name" value="Fostamatinib"/>
</dbReference>
<dbReference type="DrugCentral" id="O60285"/>
<dbReference type="GuidetoPHARMACOLOGY" id="2129"/>
<dbReference type="iPTMnet" id="O60285"/>
<dbReference type="PhosphoSitePlus" id="O60285"/>
<dbReference type="BioMuta" id="NUAK1"/>
<dbReference type="jPOST" id="O60285"/>
<dbReference type="MassIVE" id="O60285"/>
<dbReference type="PaxDb" id="9606-ENSP00000261402"/>
<dbReference type="PeptideAtlas" id="O60285"/>
<dbReference type="ProteomicsDB" id="49314">
    <molecule id="O60285-1"/>
</dbReference>
<dbReference type="ProteomicsDB" id="49315">
    <molecule id="O60285-2"/>
</dbReference>
<dbReference type="Pumba" id="O60285"/>
<dbReference type="Antibodypedia" id="30646">
    <property type="antibodies" value="315 antibodies from 35 providers"/>
</dbReference>
<dbReference type="DNASU" id="9891"/>
<dbReference type="Ensembl" id="ENST00000261402.7">
    <molecule id="O60285-1"/>
    <property type="protein sequence ID" value="ENSP00000261402.2"/>
    <property type="gene ID" value="ENSG00000074590.14"/>
</dbReference>
<dbReference type="GeneID" id="9891"/>
<dbReference type="KEGG" id="hsa:9891"/>
<dbReference type="MANE-Select" id="ENST00000261402.7">
    <property type="protein sequence ID" value="ENSP00000261402.2"/>
    <property type="RefSeq nucleotide sequence ID" value="NM_014840.3"/>
    <property type="RefSeq protein sequence ID" value="NP_055655.1"/>
</dbReference>
<dbReference type="UCSC" id="uc001tlj.2">
    <molecule id="O60285-1"/>
    <property type="organism name" value="human"/>
</dbReference>
<dbReference type="AGR" id="HGNC:14311"/>
<dbReference type="CTD" id="9891"/>
<dbReference type="DisGeNET" id="9891"/>
<dbReference type="GeneCards" id="NUAK1"/>
<dbReference type="HGNC" id="HGNC:14311">
    <property type="gene designation" value="NUAK1"/>
</dbReference>
<dbReference type="HPA" id="ENSG00000074590">
    <property type="expression patterns" value="Low tissue specificity"/>
</dbReference>
<dbReference type="MIM" id="608130">
    <property type="type" value="gene"/>
</dbReference>
<dbReference type="neXtProt" id="NX_O60285"/>
<dbReference type="OpenTargets" id="ENSG00000074590"/>
<dbReference type="PharmGKB" id="PA142671242"/>
<dbReference type="VEuPathDB" id="HostDB:ENSG00000074590"/>
<dbReference type="eggNOG" id="KOG0611">
    <property type="taxonomic scope" value="Eukaryota"/>
</dbReference>
<dbReference type="GeneTree" id="ENSGT00940000157255"/>
<dbReference type="HOGENOM" id="CLU_000288_63_42_1"/>
<dbReference type="InParanoid" id="O60285"/>
<dbReference type="OMA" id="HCGAEDK"/>
<dbReference type="OrthoDB" id="193931at2759"/>
<dbReference type="PAN-GO" id="O60285">
    <property type="GO annotations" value="5 GO annotations based on evolutionary models"/>
</dbReference>
<dbReference type="PhylomeDB" id="O60285"/>
<dbReference type="TreeFam" id="TF324572"/>
<dbReference type="PathwayCommons" id="O60285"/>
<dbReference type="Reactome" id="R-HSA-6804756">
    <property type="pathway name" value="Regulation of TP53 Activity through Phosphorylation"/>
</dbReference>
<dbReference type="SignaLink" id="O60285"/>
<dbReference type="SIGNOR" id="O60285"/>
<dbReference type="BioGRID-ORCS" id="9891">
    <property type="hits" value="15 hits in 1187 CRISPR screens"/>
</dbReference>
<dbReference type="ChiTaRS" id="NUAK1">
    <property type="organism name" value="human"/>
</dbReference>
<dbReference type="GeneWiki" id="NUAK1"/>
<dbReference type="GenomeRNAi" id="9891"/>
<dbReference type="Pharos" id="O60285">
    <property type="development level" value="Tchem"/>
</dbReference>
<dbReference type="PRO" id="PR:O60285"/>
<dbReference type="Proteomes" id="UP000005640">
    <property type="component" value="Chromosome 12"/>
</dbReference>
<dbReference type="RNAct" id="O60285">
    <property type="molecule type" value="protein"/>
</dbReference>
<dbReference type="Bgee" id="ENSG00000074590">
    <property type="expression patterns" value="Expressed in Brodmann (1909) area 23 and 206 other cell types or tissues"/>
</dbReference>
<dbReference type="ExpressionAtlas" id="O60285">
    <property type="expression patterns" value="baseline and differential"/>
</dbReference>
<dbReference type="GO" id="GO:0005737">
    <property type="term" value="C:cytoplasm"/>
    <property type="evidence" value="ECO:0000314"/>
    <property type="project" value="UniProtKB"/>
</dbReference>
<dbReference type="GO" id="GO:0001650">
    <property type="term" value="C:fibrillar center"/>
    <property type="evidence" value="ECO:0000314"/>
    <property type="project" value="HPA"/>
</dbReference>
<dbReference type="GO" id="GO:0015630">
    <property type="term" value="C:microtubule cytoskeleton"/>
    <property type="evidence" value="ECO:0000314"/>
    <property type="project" value="HPA"/>
</dbReference>
<dbReference type="GO" id="GO:0005654">
    <property type="term" value="C:nucleoplasm"/>
    <property type="evidence" value="ECO:0000314"/>
    <property type="project" value="HPA"/>
</dbReference>
<dbReference type="GO" id="GO:0005634">
    <property type="term" value="C:nucleus"/>
    <property type="evidence" value="ECO:0000314"/>
    <property type="project" value="UniProtKB"/>
</dbReference>
<dbReference type="GO" id="GO:0005524">
    <property type="term" value="F:ATP binding"/>
    <property type="evidence" value="ECO:0007669"/>
    <property type="project" value="UniProtKB-KW"/>
</dbReference>
<dbReference type="GO" id="GO:0046872">
    <property type="term" value="F:metal ion binding"/>
    <property type="evidence" value="ECO:0007669"/>
    <property type="project" value="UniProtKB-KW"/>
</dbReference>
<dbReference type="GO" id="GO:0002039">
    <property type="term" value="F:p53 binding"/>
    <property type="evidence" value="ECO:0000353"/>
    <property type="project" value="UniProtKB"/>
</dbReference>
<dbReference type="GO" id="GO:0106310">
    <property type="term" value="F:protein serine kinase activity"/>
    <property type="evidence" value="ECO:0007669"/>
    <property type="project" value="RHEA"/>
</dbReference>
<dbReference type="GO" id="GO:0004674">
    <property type="term" value="F:protein serine/threonine kinase activity"/>
    <property type="evidence" value="ECO:0000314"/>
    <property type="project" value="UniProtKB"/>
</dbReference>
<dbReference type="GO" id="GO:0007155">
    <property type="term" value="P:cell adhesion"/>
    <property type="evidence" value="ECO:0007669"/>
    <property type="project" value="UniProtKB-KW"/>
</dbReference>
<dbReference type="GO" id="GO:0006974">
    <property type="term" value="P:DNA damage response"/>
    <property type="evidence" value="ECO:0007669"/>
    <property type="project" value="UniProtKB-KW"/>
</dbReference>
<dbReference type="GO" id="GO:0006468">
    <property type="term" value="P:protein phosphorylation"/>
    <property type="evidence" value="ECO:0000314"/>
    <property type="project" value="UniProtKB"/>
</dbReference>
<dbReference type="GO" id="GO:0030155">
    <property type="term" value="P:regulation of cell adhesion"/>
    <property type="evidence" value="ECO:0000314"/>
    <property type="project" value="UniProtKB"/>
</dbReference>
<dbReference type="GO" id="GO:0042127">
    <property type="term" value="P:regulation of cell population proliferation"/>
    <property type="evidence" value="ECO:0000304"/>
    <property type="project" value="UniProtKB"/>
</dbReference>
<dbReference type="GO" id="GO:2000772">
    <property type="term" value="P:regulation of cellular senescence"/>
    <property type="evidence" value="ECO:0000314"/>
    <property type="project" value="UniProtKB"/>
</dbReference>
<dbReference type="GO" id="GO:1901796">
    <property type="term" value="P:regulation of signal transduction by p53 class mediator"/>
    <property type="evidence" value="ECO:0000304"/>
    <property type="project" value="Reactome"/>
</dbReference>
<dbReference type="CDD" id="cd14073">
    <property type="entry name" value="STKc_NUAK"/>
    <property type="match status" value="1"/>
</dbReference>
<dbReference type="FunFam" id="3.30.200.20:FF:000042">
    <property type="entry name" value="Aurora kinase A"/>
    <property type="match status" value="1"/>
</dbReference>
<dbReference type="FunFam" id="1.10.510.10:FF:000226">
    <property type="entry name" value="NUAK family SNF1-like kinase 1"/>
    <property type="match status" value="1"/>
</dbReference>
<dbReference type="Gene3D" id="1.10.510.10">
    <property type="entry name" value="Transferase(Phosphotransferase) domain 1"/>
    <property type="match status" value="1"/>
</dbReference>
<dbReference type="InterPro" id="IPR011009">
    <property type="entry name" value="Kinase-like_dom_sf"/>
</dbReference>
<dbReference type="InterPro" id="IPR000719">
    <property type="entry name" value="Prot_kinase_dom"/>
</dbReference>
<dbReference type="InterPro" id="IPR017441">
    <property type="entry name" value="Protein_kinase_ATP_BS"/>
</dbReference>
<dbReference type="InterPro" id="IPR008271">
    <property type="entry name" value="Ser/Thr_kinase_AS"/>
</dbReference>
<dbReference type="PANTHER" id="PTHR24346">
    <property type="entry name" value="MAP/MICROTUBULE AFFINITY-REGULATING KINASE"/>
    <property type="match status" value="1"/>
</dbReference>
<dbReference type="PANTHER" id="PTHR24346:SF86">
    <property type="entry name" value="NUAK FAMILY SNF1-LIKE KINASE 1"/>
    <property type="match status" value="1"/>
</dbReference>
<dbReference type="Pfam" id="PF00069">
    <property type="entry name" value="Pkinase"/>
    <property type="match status" value="1"/>
</dbReference>
<dbReference type="SMART" id="SM00220">
    <property type="entry name" value="S_TKc"/>
    <property type="match status" value="1"/>
</dbReference>
<dbReference type="SUPFAM" id="SSF56112">
    <property type="entry name" value="Protein kinase-like (PK-like)"/>
    <property type="match status" value="1"/>
</dbReference>
<dbReference type="PROSITE" id="PS00107">
    <property type="entry name" value="PROTEIN_KINASE_ATP"/>
    <property type="match status" value="1"/>
</dbReference>
<dbReference type="PROSITE" id="PS50011">
    <property type="entry name" value="PROTEIN_KINASE_DOM"/>
    <property type="match status" value="1"/>
</dbReference>
<dbReference type="PROSITE" id="PS00108">
    <property type="entry name" value="PROTEIN_KINASE_ST"/>
    <property type="match status" value="1"/>
</dbReference>
<keyword id="KW-0007">Acetylation</keyword>
<keyword id="KW-0025">Alternative splicing</keyword>
<keyword id="KW-0067">ATP-binding</keyword>
<keyword id="KW-0130">Cell adhesion</keyword>
<keyword id="KW-0963">Cytoplasm</keyword>
<keyword id="KW-0227">DNA damage</keyword>
<keyword id="KW-0418">Kinase</keyword>
<keyword id="KW-0460">Magnesium</keyword>
<keyword id="KW-0479">Metal-binding</keyword>
<keyword id="KW-0547">Nucleotide-binding</keyword>
<keyword id="KW-0539">Nucleus</keyword>
<keyword id="KW-0597">Phosphoprotein</keyword>
<keyword id="KW-1267">Proteomics identification</keyword>
<keyword id="KW-1185">Reference proteome</keyword>
<keyword id="KW-0723">Serine/threonine-protein kinase</keyword>
<keyword id="KW-0808">Transferase</keyword>
<keyword id="KW-0832">Ubl conjugation</keyword>
<proteinExistence type="evidence at protein level"/>
<sequence length="661" mass="74305">MEGAAAPVAGDRPDLGLGAPGSPREAVAGATAALEPRKPHGVKRHHHKHNLKHRYELQETLGKGTYGKVKRATERFSGRVVAIKSIRKDKIKDEQDMVHIRREIEIMSSLNHPHIISIYEVFENKDKIVIIMEYASKGELYDYISERRRLSERETRHFFRQIVSAVHYCHKNGVVHRDLKLENILLDDNCNIKIADFGLSNLYQKDKFLQTFCGSPLYASPEIVNGRPYRGPEVDSWALGVLLYTLVYGTMPFDGFDHKNLIRQISSGEYREPTQPSDARGLIRWMLMVNPDRRATIEDIANHWWVNWGYKSSVCDCDALHDSESPLLARIIDWHHRSTGLQADTEAKMKGLAKPTTSEVMLERQRSLKKSKKENDFAQSGQDAVPESPSKLSSKRPKGILKKRSNSEHRSHSTGFIEGVVGPALPSTFKMEQDLCRTGVLLPSSPEAEVPGKLSPKQSATMPKKGILKKTQQRESGYYSSPERSESSELLDSNDVMGSSIPSPSPPDPARVTSHSLSCRRKGILKHSSKYSAGTMDPALVSPEMPTLESLSEPGVPAEGLSRSYSRPSSVISDDSVLSSDSFDLLDLQENRPARQRIRSCVSAENFLQIQDFEGLQNRPRPQYLKRYRNRLADSSFSLLTDMDDVTQVYKQALEICSKLN</sequence>
<reference key="1">
    <citation type="journal article" date="2004" name="EMBO J.">
        <title>LKB1 is a master kinase that activates 13 kinases of the AMPK subfamily, including MARK/PAR-1.</title>
        <authorList>
            <person name="Lizcano J.M."/>
            <person name="Goeransson O."/>
            <person name="Toth R."/>
            <person name="Deak M."/>
            <person name="Morrice N.A."/>
            <person name="Boudeau J."/>
            <person name="Hawley S.A."/>
            <person name="Udd L."/>
            <person name="Maekelae T.P."/>
            <person name="Hardie D.G."/>
            <person name="Alessi D.R."/>
        </authorList>
    </citation>
    <scope>NUCLEOTIDE SEQUENCE [MRNA] (ISOFORM 1)</scope>
    <scope>FUNCTION</scope>
    <scope>ACTIVITY REGULATION</scope>
    <scope>PHOSPHORYLATION AT THR-211</scope>
    <scope>MUTAGENESIS OF THR-211</scope>
</reference>
<reference key="2">
    <citation type="journal article" date="1998" name="DNA Res.">
        <title>Prediction of the coding sequences of unidentified human genes. IX. The complete sequences of 100 new cDNA clones from brain which can code for large proteins in vitro.</title>
        <authorList>
            <person name="Nagase T."/>
            <person name="Ishikawa K."/>
            <person name="Miyajima N."/>
            <person name="Tanaka A."/>
            <person name="Kotani H."/>
            <person name="Nomura N."/>
            <person name="Ohara O."/>
        </authorList>
    </citation>
    <scope>NUCLEOTIDE SEQUENCE [LARGE SCALE MRNA] (ISOFORM 1)</scope>
    <source>
        <tissue>Brain</tissue>
    </source>
</reference>
<reference key="3">
    <citation type="journal article" date="2004" name="Nat. Genet.">
        <title>Complete sequencing and characterization of 21,243 full-length human cDNAs.</title>
        <authorList>
            <person name="Ota T."/>
            <person name="Suzuki Y."/>
            <person name="Nishikawa T."/>
            <person name="Otsuki T."/>
            <person name="Sugiyama T."/>
            <person name="Irie R."/>
            <person name="Wakamatsu A."/>
            <person name="Hayashi K."/>
            <person name="Sato H."/>
            <person name="Nagai K."/>
            <person name="Kimura K."/>
            <person name="Makita H."/>
            <person name="Sekine M."/>
            <person name="Obayashi M."/>
            <person name="Nishi T."/>
            <person name="Shibahara T."/>
            <person name="Tanaka T."/>
            <person name="Ishii S."/>
            <person name="Yamamoto J."/>
            <person name="Saito K."/>
            <person name="Kawai Y."/>
            <person name="Isono Y."/>
            <person name="Nakamura Y."/>
            <person name="Nagahari K."/>
            <person name="Murakami K."/>
            <person name="Yasuda T."/>
            <person name="Iwayanagi T."/>
            <person name="Wagatsuma M."/>
            <person name="Shiratori A."/>
            <person name="Sudo H."/>
            <person name="Hosoiri T."/>
            <person name="Kaku Y."/>
            <person name="Kodaira H."/>
            <person name="Kondo H."/>
            <person name="Sugawara M."/>
            <person name="Takahashi M."/>
            <person name="Kanda K."/>
            <person name="Yokoi T."/>
            <person name="Furuya T."/>
            <person name="Kikkawa E."/>
            <person name="Omura Y."/>
            <person name="Abe K."/>
            <person name="Kamihara K."/>
            <person name="Katsuta N."/>
            <person name="Sato K."/>
            <person name="Tanikawa M."/>
            <person name="Yamazaki M."/>
            <person name="Ninomiya K."/>
            <person name="Ishibashi T."/>
            <person name="Yamashita H."/>
            <person name="Murakawa K."/>
            <person name="Fujimori K."/>
            <person name="Tanai H."/>
            <person name="Kimata M."/>
            <person name="Watanabe M."/>
            <person name="Hiraoka S."/>
            <person name="Chiba Y."/>
            <person name="Ishida S."/>
            <person name="Ono Y."/>
            <person name="Takiguchi S."/>
            <person name="Watanabe S."/>
            <person name="Yosida M."/>
            <person name="Hotuta T."/>
            <person name="Kusano J."/>
            <person name="Kanehori K."/>
            <person name="Takahashi-Fujii A."/>
            <person name="Hara H."/>
            <person name="Tanase T.-O."/>
            <person name="Nomura Y."/>
            <person name="Togiya S."/>
            <person name="Komai F."/>
            <person name="Hara R."/>
            <person name="Takeuchi K."/>
            <person name="Arita M."/>
            <person name="Imose N."/>
            <person name="Musashino K."/>
            <person name="Yuuki H."/>
            <person name="Oshima A."/>
            <person name="Sasaki N."/>
            <person name="Aotsuka S."/>
            <person name="Yoshikawa Y."/>
            <person name="Matsunawa H."/>
            <person name="Ichihara T."/>
            <person name="Shiohata N."/>
            <person name="Sano S."/>
            <person name="Moriya S."/>
            <person name="Momiyama H."/>
            <person name="Satoh N."/>
            <person name="Takami S."/>
            <person name="Terashima Y."/>
            <person name="Suzuki O."/>
            <person name="Nakagawa S."/>
            <person name="Senoh A."/>
            <person name="Mizoguchi H."/>
            <person name="Goto Y."/>
            <person name="Shimizu F."/>
            <person name="Wakebe H."/>
            <person name="Hishigaki H."/>
            <person name="Watanabe T."/>
            <person name="Sugiyama A."/>
            <person name="Takemoto M."/>
            <person name="Kawakami B."/>
            <person name="Yamazaki M."/>
            <person name="Watanabe K."/>
            <person name="Kumagai A."/>
            <person name="Itakura S."/>
            <person name="Fukuzumi Y."/>
            <person name="Fujimori Y."/>
            <person name="Komiyama M."/>
            <person name="Tashiro H."/>
            <person name="Tanigami A."/>
            <person name="Fujiwara T."/>
            <person name="Ono T."/>
            <person name="Yamada K."/>
            <person name="Fujii Y."/>
            <person name="Ozaki K."/>
            <person name="Hirao M."/>
            <person name="Ohmori Y."/>
            <person name="Kawabata A."/>
            <person name="Hikiji T."/>
            <person name="Kobatake N."/>
            <person name="Inagaki H."/>
            <person name="Ikema Y."/>
            <person name="Okamoto S."/>
            <person name="Okitani R."/>
            <person name="Kawakami T."/>
            <person name="Noguchi S."/>
            <person name="Itoh T."/>
            <person name="Shigeta K."/>
            <person name="Senba T."/>
            <person name="Matsumura K."/>
            <person name="Nakajima Y."/>
            <person name="Mizuno T."/>
            <person name="Morinaga M."/>
            <person name="Sasaki M."/>
            <person name="Togashi T."/>
            <person name="Oyama M."/>
            <person name="Hata H."/>
            <person name="Watanabe M."/>
            <person name="Komatsu T."/>
            <person name="Mizushima-Sugano J."/>
            <person name="Satoh T."/>
            <person name="Shirai Y."/>
            <person name="Takahashi Y."/>
            <person name="Nakagawa K."/>
            <person name="Okumura K."/>
            <person name="Nagase T."/>
            <person name="Nomura N."/>
            <person name="Kikuchi H."/>
            <person name="Masuho Y."/>
            <person name="Yamashita R."/>
            <person name="Nakai K."/>
            <person name="Yada T."/>
            <person name="Nakamura Y."/>
            <person name="Ohara O."/>
            <person name="Isogai T."/>
            <person name="Sugano S."/>
        </authorList>
    </citation>
    <scope>NUCLEOTIDE SEQUENCE [LARGE SCALE MRNA] (ISOFORMS 1 AND 2)</scope>
    <source>
        <tissue>Hippocampus</tissue>
    </source>
</reference>
<reference key="4">
    <citation type="journal article" date="2006" name="Nature">
        <title>The finished DNA sequence of human chromosome 12.</title>
        <authorList>
            <person name="Scherer S.E."/>
            <person name="Muzny D.M."/>
            <person name="Buhay C.J."/>
            <person name="Chen R."/>
            <person name="Cree A."/>
            <person name="Ding Y."/>
            <person name="Dugan-Rocha S."/>
            <person name="Gill R."/>
            <person name="Gunaratne P."/>
            <person name="Harris R.A."/>
            <person name="Hawes A.C."/>
            <person name="Hernandez J."/>
            <person name="Hodgson A.V."/>
            <person name="Hume J."/>
            <person name="Jackson A."/>
            <person name="Khan Z.M."/>
            <person name="Kovar-Smith C."/>
            <person name="Lewis L.R."/>
            <person name="Lozado R.J."/>
            <person name="Metzker M.L."/>
            <person name="Milosavljevic A."/>
            <person name="Miner G.R."/>
            <person name="Montgomery K.T."/>
            <person name="Morgan M.B."/>
            <person name="Nazareth L.V."/>
            <person name="Scott G."/>
            <person name="Sodergren E."/>
            <person name="Song X.-Z."/>
            <person name="Steffen D."/>
            <person name="Lovering R.C."/>
            <person name="Wheeler D.A."/>
            <person name="Worley K.C."/>
            <person name="Yuan Y."/>
            <person name="Zhang Z."/>
            <person name="Adams C.Q."/>
            <person name="Ansari-Lari M.A."/>
            <person name="Ayele M."/>
            <person name="Brown M.J."/>
            <person name="Chen G."/>
            <person name="Chen Z."/>
            <person name="Clerc-Blankenburg K.P."/>
            <person name="Davis C."/>
            <person name="Delgado O."/>
            <person name="Dinh H.H."/>
            <person name="Draper H."/>
            <person name="Gonzalez-Garay M.L."/>
            <person name="Havlak P."/>
            <person name="Jackson L.R."/>
            <person name="Jacob L.S."/>
            <person name="Kelly S.H."/>
            <person name="Li L."/>
            <person name="Li Z."/>
            <person name="Liu J."/>
            <person name="Liu W."/>
            <person name="Lu J."/>
            <person name="Maheshwari M."/>
            <person name="Nguyen B.-V."/>
            <person name="Okwuonu G.O."/>
            <person name="Pasternak S."/>
            <person name="Perez L.M."/>
            <person name="Plopper F.J.H."/>
            <person name="Santibanez J."/>
            <person name="Shen H."/>
            <person name="Tabor P.E."/>
            <person name="Verduzco D."/>
            <person name="Waldron L."/>
            <person name="Wang Q."/>
            <person name="Williams G.A."/>
            <person name="Zhang J."/>
            <person name="Zhou J."/>
            <person name="Allen C.C."/>
            <person name="Amin A.G."/>
            <person name="Anyalebechi V."/>
            <person name="Bailey M."/>
            <person name="Barbaria J.A."/>
            <person name="Bimage K.E."/>
            <person name="Bryant N.P."/>
            <person name="Burch P.E."/>
            <person name="Burkett C.E."/>
            <person name="Burrell K.L."/>
            <person name="Calderon E."/>
            <person name="Cardenas V."/>
            <person name="Carter K."/>
            <person name="Casias K."/>
            <person name="Cavazos I."/>
            <person name="Cavazos S.R."/>
            <person name="Ceasar H."/>
            <person name="Chacko J."/>
            <person name="Chan S.N."/>
            <person name="Chavez D."/>
            <person name="Christopoulos C."/>
            <person name="Chu J."/>
            <person name="Cockrell R."/>
            <person name="Cox C.D."/>
            <person name="Dang M."/>
            <person name="Dathorne S.R."/>
            <person name="David R."/>
            <person name="Davis C.M."/>
            <person name="Davy-Carroll L."/>
            <person name="Deshazo D.R."/>
            <person name="Donlin J.E."/>
            <person name="D'Souza L."/>
            <person name="Eaves K.A."/>
            <person name="Egan A."/>
            <person name="Emery-Cohen A.J."/>
            <person name="Escotto M."/>
            <person name="Flagg N."/>
            <person name="Forbes L.D."/>
            <person name="Gabisi A.M."/>
            <person name="Garza M."/>
            <person name="Hamilton C."/>
            <person name="Henderson N."/>
            <person name="Hernandez O."/>
            <person name="Hines S."/>
            <person name="Hogues M.E."/>
            <person name="Huang M."/>
            <person name="Idlebird D.G."/>
            <person name="Johnson R."/>
            <person name="Jolivet A."/>
            <person name="Jones S."/>
            <person name="Kagan R."/>
            <person name="King L.M."/>
            <person name="Leal B."/>
            <person name="Lebow H."/>
            <person name="Lee S."/>
            <person name="LeVan J.M."/>
            <person name="Lewis L.C."/>
            <person name="London P."/>
            <person name="Lorensuhewa L.M."/>
            <person name="Loulseged H."/>
            <person name="Lovett D.A."/>
            <person name="Lucier A."/>
            <person name="Lucier R.L."/>
            <person name="Ma J."/>
            <person name="Madu R.C."/>
            <person name="Mapua P."/>
            <person name="Martindale A.D."/>
            <person name="Martinez E."/>
            <person name="Massey E."/>
            <person name="Mawhiney S."/>
            <person name="Meador M.G."/>
            <person name="Mendez S."/>
            <person name="Mercado C."/>
            <person name="Mercado I.C."/>
            <person name="Merritt C.E."/>
            <person name="Miner Z.L."/>
            <person name="Minja E."/>
            <person name="Mitchell T."/>
            <person name="Mohabbat F."/>
            <person name="Mohabbat K."/>
            <person name="Montgomery B."/>
            <person name="Moore N."/>
            <person name="Morris S."/>
            <person name="Munidasa M."/>
            <person name="Ngo R.N."/>
            <person name="Nguyen N.B."/>
            <person name="Nickerson E."/>
            <person name="Nwaokelemeh O.O."/>
            <person name="Nwokenkwo S."/>
            <person name="Obregon M."/>
            <person name="Oguh M."/>
            <person name="Oragunye N."/>
            <person name="Oviedo R.J."/>
            <person name="Parish B.J."/>
            <person name="Parker D.N."/>
            <person name="Parrish J."/>
            <person name="Parks K.L."/>
            <person name="Paul H.A."/>
            <person name="Payton B.A."/>
            <person name="Perez A."/>
            <person name="Perrin W."/>
            <person name="Pickens A."/>
            <person name="Primus E.L."/>
            <person name="Pu L.-L."/>
            <person name="Puazo M."/>
            <person name="Quiles M.M."/>
            <person name="Quiroz J.B."/>
            <person name="Rabata D."/>
            <person name="Reeves K."/>
            <person name="Ruiz S.J."/>
            <person name="Shao H."/>
            <person name="Sisson I."/>
            <person name="Sonaike T."/>
            <person name="Sorelle R.P."/>
            <person name="Sutton A.E."/>
            <person name="Svatek A.F."/>
            <person name="Svetz L.A."/>
            <person name="Tamerisa K.S."/>
            <person name="Taylor T.R."/>
            <person name="Teague B."/>
            <person name="Thomas N."/>
            <person name="Thorn R.D."/>
            <person name="Trejos Z.Y."/>
            <person name="Trevino B.K."/>
            <person name="Ukegbu O.N."/>
            <person name="Urban J.B."/>
            <person name="Vasquez L.I."/>
            <person name="Vera V.A."/>
            <person name="Villasana D.M."/>
            <person name="Wang L."/>
            <person name="Ward-Moore S."/>
            <person name="Warren J.T."/>
            <person name="Wei X."/>
            <person name="White F."/>
            <person name="Williamson A.L."/>
            <person name="Wleczyk R."/>
            <person name="Wooden H.S."/>
            <person name="Wooden S.H."/>
            <person name="Yen J."/>
            <person name="Yoon L."/>
            <person name="Yoon V."/>
            <person name="Zorrilla S.E."/>
            <person name="Nelson D."/>
            <person name="Kucherlapati R."/>
            <person name="Weinstock G."/>
            <person name="Gibbs R.A."/>
        </authorList>
    </citation>
    <scope>NUCLEOTIDE SEQUENCE [LARGE SCALE GENOMIC DNA]</scope>
</reference>
<reference key="5">
    <citation type="submission" date="2005-07" db="EMBL/GenBank/DDBJ databases">
        <authorList>
            <person name="Mural R.J."/>
            <person name="Istrail S."/>
            <person name="Sutton G."/>
            <person name="Florea L."/>
            <person name="Halpern A.L."/>
            <person name="Mobarry C.M."/>
            <person name="Lippert R."/>
            <person name="Walenz B."/>
            <person name="Shatkay H."/>
            <person name="Dew I."/>
            <person name="Miller J.R."/>
            <person name="Flanigan M.J."/>
            <person name="Edwards N.J."/>
            <person name="Bolanos R."/>
            <person name="Fasulo D."/>
            <person name="Halldorsson B.V."/>
            <person name="Hannenhalli S."/>
            <person name="Turner R."/>
            <person name="Yooseph S."/>
            <person name="Lu F."/>
            <person name="Nusskern D.R."/>
            <person name="Shue B.C."/>
            <person name="Zheng X.H."/>
            <person name="Zhong F."/>
            <person name="Delcher A.L."/>
            <person name="Huson D.H."/>
            <person name="Kravitz S.A."/>
            <person name="Mouchard L."/>
            <person name="Reinert K."/>
            <person name="Remington K.A."/>
            <person name="Clark A.G."/>
            <person name="Waterman M.S."/>
            <person name="Eichler E.E."/>
            <person name="Adams M.D."/>
            <person name="Hunkapiller M.W."/>
            <person name="Myers E.W."/>
            <person name="Venter J.C."/>
        </authorList>
    </citation>
    <scope>NUCLEOTIDE SEQUENCE [LARGE SCALE GENOMIC DNA]</scope>
</reference>
<reference key="6">
    <citation type="journal article" date="2004" name="Genome Res.">
        <title>The status, quality, and expansion of the NIH full-length cDNA project: the Mammalian Gene Collection (MGC).</title>
        <authorList>
            <consortium name="The MGC Project Team"/>
        </authorList>
    </citation>
    <scope>NUCLEOTIDE SEQUENCE [LARGE SCALE MRNA]</scope>
</reference>
<reference key="7">
    <citation type="journal article" date="2003" name="J. Biol. Chem.">
        <title>Identification of a novel protein kinase mediating Akt survival signaling to the ATM protein.</title>
        <authorList>
            <person name="Suzuki A."/>
            <person name="Kusakai G."/>
            <person name="Kishimoto A."/>
            <person name="Lu J."/>
            <person name="Ogura T."/>
            <person name="Lavin M.F."/>
            <person name="Esumi H."/>
        </authorList>
    </citation>
    <scope>FUNCTION</scope>
    <scope>INTERACTION WITH AKT1</scope>
    <scope>PHOSPHORYLATION AT SER-600 BY AKT1</scope>
    <scope>MUTAGENESIS OF SER-600</scope>
</reference>
<reference key="8">
    <citation type="journal article" date="2004" name="Am. J. Pathol.">
        <title>ARK5 expression in colorectal cancer and its implications for tumor progression.</title>
        <authorList>
            <person name="Kusakai G."/>
            <person name="Suzuki A."/>
            <person name="Ogura T."/>
            <person name="Miyamoto S."/>
            <person name="Ochiai A."/>
            <person name="Kaminishi M."/>
            <person name="Esumi H."/>
        </authorList>
    </citation>
    <scope>TISSUE SPECIFICITY</scope>
</reference>
<reference key="9">
    <citation type="journal article" date="2004" name="Mol. Cell. Biol.">
        <title>ARK5 is a tumor invasion-associated factor downstream of Akt signaling.</title>
        <authorList>
            <person name="Suzuki A."/>
            <person name="Lu J."/>
            <person name="Kusakai G."/>
            <person name="Kishimoto A."/>
            <person name="Ogura T."/>
            <person name="Esumi H."/>
        </authorList>
    </citation>
    <scope>FUNCTION</scope>
</reference>
<reference key="10">
    <citation type="journal article" date="2004" name="Oncogene">
        <title>Regulation of caspase-6 and FLIP by the AMPK family member ARK5.</title>
        <authorList>
            <person name="Suzuki A."/>
            <person name="Kusakai G."/>
            <person name="Kishimoto A."/>
            <person name="Shimojo Y."/>
            <person name="Miyamoto S."/>
            <person name="Ogura T."/>
            <person name="Ochiai A."/>
            <person name="Esumi H."/>
        </authorList>
    </citation>
    <scope>FUNCTION</scope>
</reference>
<reference key="11">
    <citation type="journal article" date="2005" name="Oncogene">
        <title>ARK5 is transcriptionally regulated by the Large-MAF family and mediates IGF-1-induced cell invasion in multiple myeloma: ARK5 as a new molecular determinant of malignant multiple myeloma.</title>
        <authorList>
            <person name="Suzuki A."/>
            <person name="Iida S."/>
            <person name="Kato-Uranishi M."/>
            <person name="Tajima E."/>
            <person name="Zhan F."/>
            <person name="Hanamura I."/>
            <person name="Huang Y."/>
            <person name="Ogura T."/>
            <person name="Takahashi S."/>
            <person name="Ueda R."/>
            <person name="Barlogie B."/>
            <person name="Shaughnessy J. Jr."/>
            <person name="Esumi H."/>
        </authorList>
    </citation>
    <scope>INDUCTION</scope>
</reference>
<reference key="12">
    <citation type="journal article" date="2006" name="Cancer Res.">
        <title>Overexpression of c-Maf contributes to T-cell lymphoma in both mice and human.</title>
        <authorList>
            <person name="Morito N."/>
            <person name="Yoh K."/>
            <person name="Fujioka Y."/>
            <person name="Nakano T."/>
            <person name="Shimohata H."/>
            <person name="Hashimoto Y."/>
            <person name="Yamada A."/>
            <person name="Maeda A."/>
            <person name="Matsuno F."/>
            <person name="Hata H."/>
            <person name="Suzuki A."/>
            <person name="Imagawa S."/>
            <person name="Mitsuya H."/>
            <person name="Esumi H."/>
            <person name="Koyama A."/>
            <person name="Yamamoto M."/>
            <person name="Mori N."/>
            <person name="Takahashi S."/>
        </authorList>
    </citation>
    <scope>INDUCTION</scope>
</reference>
<reference key="13">
    <citation type="journal article" date="2006" name="J. Biol. Chem.">
        <title>NDR2 acts as the upstream kinase of ARK5 during insulin-like growth factor-1 signaling.</title>
        <authorList>
            <person name="Suzuki A."/>
            <person name="Ogura T."/>
            <person name="Esumi H."/>
        </authorList>
    </citation>
    <scope>PHOSPHORYLATION BY STK38L</scope>
</reference>
<reference key="14">
    <citation type="journal article" date="2008" name="Biochem. J.">
        <title>Control of AMPK-related kinases by USP9X and atypical Lys(29)/Lys(33)-linked polyubiquitin chains.</title>
        <authorList>
            <person name="Al-Hakim A.K."/>
            <person name="Zagorska A."/>
            <person name="Chapman L."/>
            <person name="Deak M."/>
            <person name="Peggie M."/>
            <person name="Alessi D.R."/>
        </authorList>
    </citation>
    <scope>UBIQUITINATION</scope>
    <scope>DEUBIQUITINATION BY USP9X</scope>
</reference>
<reference key="15">
    <citation type="journal article" date="2009" name="Mol. Cell. Proteomics">
        <title>Large-scale proteomics analysis of the human kinome.</title>
        <authorList>
            <person name="Oppermann F.S."/>
            <person name="Gnad F."/>
            <person name="Olsen J.V."/>
            <person name="Hornberger R."/>
            <person name="Greff Z."/>
            <person name="Keri G."/>
            <person name="Mann M."/>
            <person name="Daub H."/>
        </authorList>
    </citation>
    <scope>ACETYLATION [LARGE SCALE ANALYSIS] AT MET-1</scope>
    <scope>PHOSPHORYLATION [LARGE SCALE ANALYSIS] AT SER-22; THR-211 AND SER-455</scope>
    <scope>IDENTIFICATION BY MASS SPECTROMETRY [LARGE SCALE ANALYSIS]</scope>
</reference>
<reference key="16">
    <citation type="journal article" date="2010" name="EMBO J.">
        <title>Regulation of ploidy and senescence by the AMPK-related kinase NUAK1.</title>
        <authorList>
            <person name="Humbert N."/>
            <person name="Navaratnam N."/>
            <person name="Augert A."/>
            <person name="Da Costa M."/>
            <person name="Martien S."/>
            <person name="Wang J."/>
            <person name="Martinez D."/>
            <person name="Abbadie C."/>
            <person name="Carling D."/>
            <person name="de Launoit Y."/>
            <person name="Gil J."/>
            <person name="Bernard D."/>
        </authorList>
    </citation>
    <scope>FUNCTION</scope>
    <scope>MUTAGENESIS OF LYS-84; THR-211 AND SER-600</scope>
</reference>
<reference key="17">
    <citation type="journal article" date="2010" name="Sci. Signal.">
        <title>New roles for the LKB1-NUAK pathway in controlling myosin phosphatase complexes and cell adhesion.</title>
        <authorList>
            <person name="Zagorska A."/>
            <person name="Deak M."/>
            <person name="Campbell D.G."/>
            <person name="Banerjee S."/>
            <person name="Hirano M."/>
            <person name="Aizawa S."/>
            <person name="Prescott A.R."/>
            <person name="Alessi D.R."/>
        </authorList>
    </citation>
    <scope>FUNCTION</scope>
    <scope>INTERACTION WITH PPP1CB</scope>
    <scope>DOMAIN GILK</scope>
    <scope>MUTAGENESIS OF 400-ILE-LEU-401</scope>
    <scope>PHOSPHORYLATION AT THR-211</scope>
</reference>
<reference key="18">
    <citation type="journal article" date="2011" name="Oncogene">
        <title>A new role of NUAK1: directly phosphorylating p53 and regulating cell proliferation.</title>
        <authorList>
            <person name="Hou X."/>
            <person name="Liu J.E."/>
            <person name="Liu W."/>
            <person name="Liu C.Y."/>
            <person name="Liu Z.Y."/>
            <person name="Sun Z.Y."/>
        </authorList>
    </citation>
    <scope>FUNCTION</scope>
    <scope>SUBCELLULAR LOCATION</scope>
    <scope>MUTAGENESIS OF LYS-84 AND THR-211</scope>
</reference>
<reference key="19">
    <citation type="journal article" date="2014" name="PLoS Genet.">
        <title>A mouse model uncovers LKB1 as an UVB-induced DNA damage sensor mediating CDKN1A (p21WAF1/CIP1) degradation.</title>
        <authorList>
            <person name="Esteve-Puig R."/>
            <person name="Gil R."/>
            <person name="Gonzalez-Sanchez E."/>
            <person name="Bech-Serra J.J."/>
            <person name="Grueso J."/>
            <person name="Hernandez-Losa J."/>
            <person name="Moline T."/>
            <person name="Canals F."/>
            <person name="Ferrer B."/>
            <person name="Cortes J."/>
            <person name="Bastian B."/>
            <person name="Cajal S.R.Y."/>
            <person name="Martin-Caballero J."/>
            <person name="Flores J.M."/>
            <person name="Vivancos A."/>
            <person name="Garcia-Patos V."/>
            <person name="Recio J.A."/>
        </authorList>
    </citation>
    <scope>FUNCTION</scope>
    <scope>INTERACTION WITH CDKN1A</scope>
</reference>
<reference key="20">
    <citation type="journal article" date="2007" name="Nature">
        <title>Patterns of somatic mutation in human cancer genomes.</title>
        <authorList>
            <person name="Greenman C."/>
            <person name="Stephens P."/>
            <person name="Smith R."/>
            <person name="Dalgliesh G.L."/>
            <person name="Hunter C."/>
            <person name="Bignell G."/>
            <person name="Davies H."/>
            <person name="Teague J."/>
            <person name="Butler A."/>
            <person name="Stevens C."/>
            <person name="Edkins S."/>
            <person name="O'Meara S."/>
            <person name="Vastrik I."/>
            <person name="Schmidt E.E."/>
            <person name="Avis T."/>
            <person name="Barthorpe S."/>
            <person name="Bhamra G."/>
            <person name="Buck G."/>
            <person name="Choudhury B."/>
            <person name="Clements J."/>
            <person name="Cole J."/>
            <person name="Dicks E."/>
            <person name="Forbes S."/>
            <person name="Gray K."/>
            <person name="Halliday K."/>
            <person name="Harrison R."/>
            <person name="Hills K."/>
            <person name="Hinton J."/>
            <person name="Jenkinson A."/>
            <person name="Jones D."/>
            <person name="Menzies A."/>
            <person name="Mironenko T."/>
            <person name="Perry J."/>
            <person name="Raine K."/>
            <person name="Richardson D."/>
            <person name="Shepherd R."/>
            <person name="Small A."/>
            <person name="Tofts C."/>
            <person name="Varian J."/>
            <person name="Webb T."/>
            <person name="West S."/>
            <person name="Widaa S."/>
            <person name="Yates A."/>
            <person name="Cahill D.P."/>
            <person name="Louis D.N."/>
            <person name="Goldstraw P."/>
            <person name="Nicholson A.G."/>
            <person name="Brasseur F."/>
            <person name="Looijenga L."/>
            <person name="Weber B.L."/>
            <person name="Chiew Y.-E."/>
            <person name="DeFazio A."/>
            <person name="Greaves M.F."/>
            <person name="Green A.R."/>
            <person name="Campbell P."/>
            <person name="Birney E."/>
            <person name="Easton D.F."/>
            <person name="Chenevix-Trench G."/>
            <person name="Tan M.-H."/>
            <person name="Khoo S.K."/>
            <person name="Teh B.T."/>
            <person name="Yuen S.T."/>
            <person name="Leung S.Y."/>
            <person name="Wooster R."/>
            <person name="Futreal P.A."/>
            <person name="Stratton M.R."/>
        </authorList>
    </citation>
    <scope>VARIANTS [LARGE SCALE ANALYSIS] ASP-419 AND ARG-543</scope>
</reference>
<accession>O60285</accession>
<accession>A7MD39</accession>
<accession>Q96KA8</accession>
<protein>
    <recommendedName>
        <fullName>NUAK family SNF1-like kinase 1</fullName>
        <ecNumber>2.7.11.1</ecNumber>
    </recommendedName>
    <alternativeName>
        <fullName>AMPK-related protein kinase 5</fullName>
        <shortName>ARK5</shortName>
    </alternativeName>
    <alternativeName>
        <fullName>Omphalocele kinase 1</fullName>
    </alternativeName>
</protein>
<gene>
    <name type="primary">NUAK1</name>
    <name type="synonym">ARK5</name>
    <name type="synonym">KIAA0537</name>
    <name type="synonym">OMPHK1</name>
</gene>
<comment type="function">
    <text evidence="4 5 7 8 13 14 15 16">Serine/threonine-protein kinase involved in various processes such as cell adhesion, regulation of cell ploidy and senescence, cell proliferation and tumor progression. Phosphorylates ATM, CASP6, LATS1, PPP1R12A and p53/TP53. Acts as a regulator of cellular senescence and cellular ploidy by mediating phosphorylation of 'Ser-464' of LATS1, thereby controlling its stability. Controls cell adhesion by regulating activity of the myosin protein phosphatase 1 (PP1) complex. Acts by mediating phosphorylation of PPP1R12A subunit of myosin PP1: phosphorylated PPP1R12A then interacts with 14-3-3, leading to reduced dephosphorylation of myosin MLC2 by myosin PP1. May be involved in DNA damage response: phosphorylates p53/TP53 at 'Ser-15' and 'Ser-392' and is recruited to the CDKN1A/WAF1 promoter to participate in transcription activation by p53/TP53. May also act as a tumor malignancy-associated factor by promoting tumor invasion and metastasis under regulation and phosphorylation by AKT1. Suppresses Fas-induced apoptosis by mediating phosphorylation of CASP6, thereby suppressing the activation of the caspase and the subsequent cleavage of CFLAR. Regulates UV radiation-induced DNA damage response mediated by CDKN1A. In association with STK11, phosphorylates CDKN1A in response to UV radiation and contributes to its degradation which is necessary for optimal DNA repair (PubMed:25329316).</text>
</comment>
<comment type="catalytic activity">
    <reaction>
        <text>L-seryl-[protein] + ATP = O-phospho-L-seryl-[protein] + ADP + H(+)</text>
        <dbReference type="Rhea" id="RHEA:17989"/>
        <dbReference type="Rhea" id="RHEA-COMP:9863"/>
        <dbReference type="Rhea" id="RHEA-COMP:11604"/>
        <dbReference type="ChEBI" id="CHEBI:15378"/>
        <dbReference type="ChEBI" id="CHEBI:29999"/>
        <dbReference type="ChEBI" id="CHEBI:30616"/>
        <dbReference type="ChEBI" id="CHEBI:83421"/>
        <dbReference type="ChEBI" id="CHEBI:456216"/>
        <dbReference type="EC" id="2.7.11.1"/>
    </reaction>
</comment>
<comment type="catalytic activity">
    <reaction>
        <text>L-threonyl-[protein] + ATP = O-phospho-L-threonyl-[protein] + ADP + H(+)</text>
        <dbReference type="Rhea" id="RHEA:46608"/>
        <dbReference type="Rhea" id="RHEA-COMP:11060"/>
        <dbReference type="Rhea" id="RHEA-COMP:11605"/>
        <dbReference type="ChEBI" id="CHEBI:15378"/>
        <dbReference type="ChEBI" id="CHEBI:30013"/>
        <dbReference type="ChEBI" id="CHEBI:30616"/>
        <dbReference type="ChEBI" id="CHEBI:61977"/>
        <dbReference type="ChEBI" id="CHEBI:456216"/>
        <dbReference type="EC" id="2.7.11.1"/>
    </reaction>
</comment>
<comment type="cofactor">
    <cofactor>
        <name>Mg(2+)</name>
        <dbReference type="ChEBI" id="CHEBI:18420"/>
    </cofactor>
</comment>
<comment type="activity regulation">
    <text evidence="5">Activated by phosphorylation on Thr-211. Activated by phosphorylation at Ser-600 AKT1 during glucose starvation; the relevance of such activation in normal cells is however unsure.</text>
</comment>
<comment type="subunit">
    <text evidence="16">Interacts (via GILK motif) with PPP1CB; the interaction is direct and bridges NUAK1 and PPP1R12A. Interacts with CDKN1A.</text>
</comment>
<comment type="interaction">
    <interactant intactId="EBI-1046789">
        <id>O60285</id>
    </interactant>
    <interactant intactId="EBI-444209">
        <id>O95835</id>
        <label>LATS1</label>
    </interactant>
    <organismsDiffer>false</organismsDiffer>
    <experiments>2</experiments>
</comment>
<comment type="interaction">
    <interactant intactId="EBI-1046789">
        <id>O60285</id>
    </interactant>
    <interactant intactId="EBI-1050142">
        <id>Q9UQ35</id>
        <label>SRRM2</label>
    </interactant>
    <organismsDiffer>false</organismsDiffer>
    <experiments>2</experiments>
</comment>
<comment type="interaction">
    <interactant intactId="EBI-1046789">
        <id>O60285</id>
    </interactant>
    <interactant intactId="EBI-366083">
        <id>P04637</id>
        <label>TP53</label>
    </interactant>
    <organismsDiffer>false</organismsDiffer>
    <experiments>5</experiments>
</comment>
<comment type="interaction">
    <interactant intactId="EBI-1046789">
        <id>O60285</id>
    </interactant>
    <interactant intactId="EBI-302524">
        <id>Q93008</id>
        <label>USP9X</label>
    </interactant>
    <organismsDiffer>false</organismsDiffer>
    <experiments>2</experiments>
</comment>
<comment type="subcellular location">
    <subcellularLocation>
        <location evidence="15">Nucleus</location>
    </subcellularLocation>
    <subcellularLocation>
        <location evidence="15">Cytoplasm</location>
    </subcellularLocation>
</comment>
<comment type="alternative products">
    <event type="alternative splicing"/>
    <isoform>
        <id>O60285-1</id>
        <name>1</name>
        <sequence type="displayed"/>
    </isoform>
    <isoform>
        <id>O60285-2</id>
        <name>2</name>
        <sequence type="described" ref="VSP_014236 VSP_014237"/>
    </isoform>
</comment>
<comment type="tissue specificity">
    <text evidence="6">Expressed at high levels in heart and brain, and at lower levels in skeletal muscle, kidney, ovary, placenta, lung and liver. Highly up-regulated in colorectal cancer cell lines.</text>
</comment>
<comment type="induction">
    <text evidence="9 10">Transcriptionally regulated by members of the MAF family.</text>
</comment>
<comment type="domain">
    <text evidence="14">The GILK motif mediates interaction with PPP1CB.</text>
</comment>
<comment type="PTM">
    <text evidence="12">Ubiquitinated with 'Lys-29'- and 'Lys-33'-linked polyubiquitins which appear to impede LKB1-mediated phosphorylation. Deubiquitinated by USP9X.</text>
</comment>
<comment type="PTM">
    <text evidence="5 14">Phosphorylated at Thr-211 by STK11/LKB1 in complex with STE20-related adapter-alpha (STRADA) pseudo kinase and CAB39. Not dephosphorylated by the myosin PP1 complex when regulating its activity, due to the presence of PPP1R12A, which prevents myosin PP1 from dephosphorylating NUAK1. Phosphorylated by STK38L upon stimulation with IGF1.</text>
</comment>
<comment type="similarity">
    <text evidence="18">Belongs to the protein kinase superfamily. CAMK Ser/Thr protein kinase family. SNF1 subfamily.</text>
</comment>
<comment type="sequence caution" evidence="18">
    <conflict type="erroneous initiation">
        <sequence resource="EMBL-CDS" id="BAA25463"/>
    </conflict>
    <text>Extended N-terminus.</text>
</comment>